<keyword id="KW-0488">Methylation</keyword>
<keyword id="KW-0687">Ribonucleoprotein</keyword>
<keyword id="KW-0689">Ribosomal protein</keyword>
<keyword id="KW-0694">RNA-binding</keyword>
<keyword id="KW-0699">rRNA-binding</keyword>
<keyword id="KW-0820">tRNA-binding</keyword>
<dbReference type="EMBL" id="CP000259">
    <property type="protein sequence ID" value="ABF31420.1"/>
    <property type="molecule type" value="Genomic_DNA"/>
</dbReference>
<dbReference type="RefSeq" id="WP_002986049.1">
    <property type="nucleotide sequence ID" value="NC_008021.1"/>
</dbReference>
<dbReference type="SMR" id="Q1JNH9"/>
<dbReference type="GeneID" id="69900197"/>
<dbReference type="KEGG" id="spk:MGAS9429_Spy0232"/>
<dbReference type="HOGENOM" id="CLU_104295_1_2_9"/>
<dbReference type="Proteomes" id="UP000002433">
    <property type="component" value="Chromosome"/>
</dbReference>
<dbReference type="GO" id="GO:0015935">
    <property type="term" value="C:small ribosomal subunit"/>
    <property type="evidence" value="ECO:0007669"/>
    <property type="project" value="InterPro"/>
</dbReference>
<dbReference type="GO" id="GO:0019843">
    <property type="term" value="F:rRNA binding"/>
    <property type="evidence" value="ECO:0007669"/>
    <property type="project" value="UniProtKB-UniRule"/>
</dbReference>
<dbReference type="GO" id="GO:0003735">
    <property type="term" value="F:structural constituent of ribosome"/>
    <property type="evidence" value="ECO:0007669"/>
    <property type="project" value="InterPro"/>
</dbReference>
<dbReference type="GO" id="GO:0000049">
    <property type="term" value="F:tRNA binding"/>
    <property type="evidence" value="ECO:0007669"/>
    <property type="project" value="UniProtKB-UniRule"/>
</dbReference>
<dbReference type="GO" id="GO:0006412">
    <property type="term" value="P:translation"/>
    <property type="evidence" value="ECO:0007669"/>
    <property type="project" value="UniProtKB-UniRule"/>
</dbReference>
<dbReference type="CDD" id="cd03368">
    <property type="entry name" value="Ribosomal_S12"/>
    <property type="match status" value="1"/>
</dbReference>
<dbReference type="FunFam" id="2.40.50.140:FF:000001">
    <property type="entry name" value="30S ribosomal protein S12"/>
    <property type="match status" value="1"/>
</dbReference>
<dbReference type="Gene3D" id="2.40.50.140">
    <property type="entry name" value="Nucleic acid-binding proteins"/>
    <property type="match status" value="1"/>
</dbReference>
<dbReference type="HAMAP" id="MF_00403_B">
    <property type="entry name" value="Ribosomal_uS12_B"/>
    <property type="match status" value="1"/>
</dbReference>
<dbReference type="InterPro" id="IPR012340">
    <property type="entry name" value="NA-bd_OB-fold"/>
</dbReference>
<dbReference type="InterPro" id="IPR006032">
    <property type="entry name" value="Ribosomal_uS12"/>
</dbReference>
<dbReference type="InterPro" id="IPR005679">
    <property type="entry name" value="Ribosomal_uS12_bac"/>
</dbReference>
<dbReference type="NCBIfam" id="TIGR00981">
    <property type="entry name" value="rpsL_bact"/>
    <property type="match status" value="1"/>
</dbReference>
<dbReference type="PANTHER" id="PTHR11652">
    <property type="entry name" value="30S RIBOSOMAL PROTEIN S12 FAMILY MEMBER"/>
    <property type="match status" value="1"/>
</dbReference>
<dbReference type="Pfam" id="PF00164">
    <property type="entry name" value="Ribosom_S12_S23"/>
    <property type="match status" value="1"/>
</dbReference>
<dbReference type="PRINTS" id="PR01034">
    <property type="entry name" value="RIBOSOMALS12"/>
</dbReference>
<dbReference type="SUPFAM" id="SSF50249">
    <property type="entry name" value="Nucleic acid-binding proteins"/>
    <property type="match status" value="1"/>
</dbReference>
<dbReference type="PROSITE" id="PS00055">
    <property type="entry name" value="RIBOSOMAL_S12"/>
    <property type="match status" value="1"/>
</dbReference>
<proteinExistence type="inferred from homology"/>
<comment type="function">
    <text evidence="2">With S4 and S5 plays an important role in translational accuracy.</text>
</comment>
<comment type="function">
    <text evidence="2">Interacts with and stabilizes bases of the 16S rRNA that are involved in tRNA selection in the A site and with the mRNA backbone. Located at the interface of the 30S and 50S subunits, it traverses the body of the 30S subunit contacting proteins on the other side and probably holding the rRNA structure together. The combined cluster of proteins S8, S12 and S17 appears to hold together the shoulder and platform of the 30S subunit.</text>
</comment>
<comment type="subunit">
    <text evidence="2">Part of the 30S ribosomal subunit. Contacts proteins S8 and S17. May interact with IF1 in the 30S initiation complex.</text>
</comment>
<comment type="similarity">
    <text evidence="2">Belongs to the universal ribosomal protein uS12 family.</text>
</comment>
<sequence length="137" mass="15086">MPTINQLVRKPRKSKIEKSDSPALNIGYNSHKKVQTKMAAPQKRGVATRVGTMTPKKPNSALRKFARVRLSNLIEVTAYIPGIGHNLQEHSVVLIRGGRVKDLPGVRYHIVRGALDTAGVADRKQGRSKYGAKRPKG</sequence>
<feature type="chain" id="PRO_0000263596" description="Small ribosomal subunit protein uS12">
    <location>
        <begin position="1"/>
        <end position="137"/>
    </location>
</feature>
<feature type="region of interest" description="Disordered" evidence="3">
    <location>
        <begin position="1"/>
        <end position="21"/>
    </location>
</feature>
<feature type="region of interest" description="Disordered" evidence="3">
    <location>
        <begin position="33"/>
        <end position="57"/>
    </location>
</feature>
<feature type="modified residue" description="3-methylthioaspartic acid" evidence="1">
    <location>
        <position position="102"/>
    </location>
</feature>
<reference key="1">
    <citation type="journal article" date="2006" name="Proc. Natl. Acad. Sci. U.S.A.">
        <title>Molecular genetic anatomy of inter- and intraserotype variation in the human bacterial pathogen group A Streptococcus.</title>
        <authorList>
            <person name="Beres S.B."/>
            <person name="Richter E.W."/>
            <person name="Nagiec M.J."/>
            <person name="Sumby P."/>
            <person name="Porcella S.F."/>
            <person name="DeLeo F.R."/>
            <person name="Musser J.M."/>
        </authorList>
    </citation>
    <scope>NUCLEOTIDE SEQUENCE [LARGE SCALE GENOMIC DNA]</scope>
    <source>
        <strain>MGAS9429</strain>
    </source>
</reference>
<protein>
    <recommendedName>
        <fullName evidence="2">Small ribosomal subunit protein uS12</fullName>
    </recommendedName>
    <alternativeName>
        <fullName evidence="4">30S ribosomal protein S12</fullName>
    </alternativeName>
</protein>
<accession>Q1JNH9</accession>
<gene>
    <name evidence="2" type="primary">rpsL</name>
    <name type="ordered locus">MGAS9429_Spy0232</name>
</gene>
<organism>
    <name type="scientific">Streptococcus pyogenes serotype M12 (strain MGAS9429)</name>
    <dbReference type="NCBI Taxonomy" id="370551"/>
    <lineage>
        <taxon>Bacteria</taxon>
        <taxon>Bacillati</taxon>
        <taxon>Bacillota</taxon>
        <taxon>Bacilli</taxon>
        <taxon>Lactobacillales</taxon>
        <taxon>Streptococcaceae</taxon>
        <taxon>Streptococcus</taxon>
    </lineage>
</organism>
<evidence type="ECO:0000250" key="1"/>
<evidence type="ECO:0000255" key="2">
    <source>
        <dbReference type="HAMAP-Rule" id="MF_00403"/>
    </source>
</evidence>
<evidence type="ECO:0000256" key="3">
    <source>
        <dbReference type="SAM" id="MobiDB-lite"/>
    </source>
</evidence>
<evidence type="ECO:0000305" key="4"/>
<name>RS12_STRPC</name>